<evidence type="ECO:0000255" key="1"/>
<evidence type="ECO:0000256" key="2">
    <source>
        <dbReference type="SAM" id="MobiDB-lite"/>
    </source>
</evidence>
<evidence type="ECO:0000269" key="3">
    <source>
    </source>
</evidence>
<evidence type="ECO:0000305" key="4"/>
<reference key="1">
    <citation type="journal article" date="2002" name="Nature">
        <title>The genome sequence of Schizosaccharomyces pombe.</title>
        <authorList>
            <person name="Wood V."/>
            <person name="Gwilliam R."/>
            <person name="Rajandream M.A."/>
            <person name="Lyne M.H."/>
            <person name="Lyne R."/>
            <person name="Stewart A."/>
            <person name="Sgouros J.G."/>
            <person name="Peat N."/>
            <person name="Hayles J."/>
            <person name="Baker S.G."/>
            <person name="Basham D."/>
            <person name="Bowman S."/>
            <person name="Brooks K."/>
            <person name="Brown D."/>
            <person name="Brown S."/>
            <person name="Chillingworth T."/>
            <person name="Churcher C.M."/>
            <person name="Collins M."/>
            <person name="Connor R."/>
            <person name="Cronin A."/>
            <person name="Davis P."/>
            <person name="Feltwell T."/>
            <person name="Fraser A."/>
            <person name="Gentles S."/>
            <person name="Goble A."/>
            <person name="Hamlin N."/>
            <person name="Harris D.E."/>
            <person name="Hidalgo J."/>
            <person name="Hodgson G."/>
            <person name="Holroyd S."/>
            <person name="Hornsby T."/>
            <person name="Howarth S."/>
            <person name="Huckle E.J."/>
            <person name="Hunt S."/>
            <person name="Jagels K."/>
            <person name="James K.D."/>
            <person name="Jones L."/>
            <person name="Jones M."/>
            <person name="Leather S."/>
            <person name="McDonald S."/>
            <person name="McLean J."/>
            <person name="Mooney P."/>
            <person name="Moule S."/>
            <person name="Mungall K.L."/>
            <person name="Murphy L.D."/>
            <person name="Niblett D."/>
            <person name="Odell C."/>
            <person name="Oliver K."/>
            <person name="O'Neil S."/>
            <person name="Pearson D."/>
            <person name="Quail M.A."/>
            <person name="Rabbinowitsch E."/>
            <person name="Rutherford K.M."/>
            <person name="Rutter S."/>
            <person name="Saunders D."/>
            <person name="Seeger K."/>
            <person name="Sharp S."/>
            <person name="Skelton J."/>
            <person name="Simmonds M.N."/>
            <person name="Squares R."/>
            <person name="Squares S."/>
            <person name="Stevens K."/>
            <person name="Taylor K."/>
            <person name="Taylor R.G."/>
            <person name="Tivey A."/>
            <person name="Walsh S.V."/>
            <person name="Warren T."/>
            <person name="Whitehead S."/>
            <person name="Woodward J.R."/>
            <person name="Volckaert G."/>
            <person name="Aert R."/>
            <person name="Robben J."/>
            <person name="Grymonprez B."/>
            <person name="Weltjens I."/>
            <person name="Vanstreels E."/>
            <person name="Rieger M."/>
            <person name="Schaefer M."/>
            <person name="Mueller-Auer S."/>
            <person name="Gabel C."/>
            <person name="Fuchs M."/>
            <person name="Duesterhoeft A."/>
            <person name="Fritzc C."/>
            <person name="Holzer E."/>
            <person name="Moestl D."/>
            <person name="Hilbert H."/>
            <person name="Borzym K."/>
            <person name="Langer I."/>
            <person name="Beck A."/>
            <person name="Lehrach H."/>
            <person name="Reinhardt R."/>
            <person name="Pohl T.M."/>
            <person name="Eger P."/>
            <person name="Zimmermann W."/>
            <person name="Wedler H."/>
            <person name="Wambutt R."/>
            <person name="Purnelle B."/>
            <person name="Goffeau A."/>
            <person name="Cadieu E."/>
            <person name="Dreano S."/>
            <person name="Gloux S."/>
            <person name="Lelaure V."/>
            <person name="Mottier S."/>
            <person name="Galibert F."/>
            <person name="Aves S.J."/>
            <person name="Xiang Z."/>
            <person name="Hunt C."/>
            <person name="Moore K."/>
            <person name="Hurst S.M."/>
            <person name="Lucas M."/>
            <person name="Rochet M."/>
            <person name="Gaillardin C."/>
            <person name="Tallada V.A."/>
            <person name="Garzon A."/>
            <person name="Thode G."/>
            <person name="Daga R.R."/>
            <person name="Cruzado L."/>
            <person name="Jimenez J."/>
            <person name="Sanchez M."/>
            <person name="del Rey F."/>
            <person name="Benito J."/>
            <person name="Dominguez A."/>
            <person name="Revuelta J.L."/>
            <person name="Moreno S."/>
            <person name="Armstrong J."/>
            <person name="Forsburg S.L."/>
            <person name="Cerutti L."/>
            <person name="Lowe T."/>
            <person name="McCombie W.R."/>
            <person name="Paulsen I."/>
            <person name="Potashkin J."/>
            <person name="Shpakovski G.V."/>
            <person name="Ussery D."/>
            <person name="Barrell B.G."/>
            <person name="Nurse P."/>
        </authorList>
    </citation>
    <scope>NUCLEOTIDE SEQUENCE [LARGE SCALE GENOMIC DNA]</scope>
    <source>
        <strain>972 / ATCC 24843</strain>
    </source>
</reference>
<reference key="2">
    <citation type="journal article" date="2006" name="Nat. Biotechnol.">
        <title>ORFeome cloning and global analysis of protein localization in the fission yeast Schizosaccharomyces pombe.</title>
        <authorList>
            <person name="Matsuyama A."/>
            <person name="Arai R."/>
            <person name="Yashiroda Y."/>
            <person name="Shirai A."/>
            <person name="Kamata A."/>
            <person name="Sekido S."/>
            <person name="Kobayashi Y."/>
            <person name="Hashimoto A."/>
            <person name="Hamamoto M."/>
            <person name="Hiraoka Y."/>
            <person name="Horinouchi S."/>
            <person name="Yoshida M."/>
        </authorList>
    </citation>
    <scope>SUBCELLULAR LOCATION [LARGE SCALE ANALYSIS]</scope>
</reference>
<feature type="signal peptide" evidence="1">
    <location>
        <begin position="1"/>
        <end position="23"/>
    </location>
</feature>
<feature type="chain" id="PRO_0000316235" description="Uncharacterized zinc transporter P8A3.03">
    <location>
        <begin position="24"/>
        <end position="453"/>
    </location>
</feature>
<feature type="topological domain" description="Lumenal" evidence="1">
    <location>
        <begin position="24"/>
        <end position="137"/>
    </location>
</feature>
<feature type="transmembrane region" description="Helical" evidence="1">
    <location>
        <begin position="138"/>
        <end position="158"/>
    </location>
</feature>
<feature type="topological domain" description="Cytoplasmic" evidence="1">
    <location>
        <begin position="159"/>
        <end position="165"/>
    </location>
</feature>
<feature type="transmembrane region" description="Helical" evidence="1">
    <location>
        <begin position="166"/>
        <end position="186"/>
    </location>
</feature>
<feature type="topological domain" description="Lumenal" evidence="1">
    <location>
        <begin position="187"/>
        <end position="194"/>
    </location>
</feature>
<feature type="transmembrane region" description="Helical" evidence="1">
    <location>
        <begin position="195"/>
        <end position="215"/>
    </location>
</feature>
<feature type="topological domain" description="Cytoplasmic" evidence="1">
    <location>
        <begin position="216"/>
        <end position="358"/>
    </location>
</feature>
<feature type="transmembrane region" description="Helical" evidence="1">
    <location>
        <begin position="359"/>
        <end position="379"/>
    </location>
</feature>
<feature type="topological domain" description="Lumenal" evidence="1">
    <location>
        <begin position="380"/>
        <end position="399"/>
    </location>
</feature>
<feature type="transmembrane region" description="Helical" evidence="1">
    <location>
        <begin position="400"/>
        <end position="420"/>
    </location>
</feature>
<feature type="topological domain" description="Cytoplasmic" evidence="1">
    <location>
        <begin position="421"/>
        <end position="432"/>
    </location>
</feature>
<feature type="transmembrane region" description="Helical" evidence="1">
    <location>
        <begin position="433"/>
        <end position="453"/>
    </location>
</feature>
<feature type="region of interest" description="Disordered" evidence="2">
    <location>
        <begin position="229"/>
        <end position="278"/>
    </location>
</feature>
<feature type="compositionally biased region" description="Basic and acidic residues" evidence="2">
    <location>
        <begin position="229"/>
        <end position="238"/>
    </location>
</feature>
<feature type="compositionally biased region" description="Polar residues" evidence="2">
    <location>
        <begin position="240"/>
        <end position="254"/>
    </location>
</feature>
<feature type="compositionally biased region" description="Basic and acidic residues" evidence="2">
    <location>
        <begin position="256"/>
        <end position="278"/>
    </location>
</feature>
<name>YLW3_SCHPO</name>
<accession>Q9UT11</accession>
<gene>
    <name type="ORF">SPAP8A3.03</name>
</gene>
<dbReference type="EMBL" id="CU329670">
    <property type="protein sequence ID" value="CAB55170.1"/>
    <property type="molecule type" value="Genomic_DNA"/>
</dbReference>
<dbReference type="PIR" id="T39240">
    <property type="entry name" value="T39240"/>
</dbReference>
<dbReference type="SMR" id="Q9UT11"/>
<dbReference type="BioGRID" id="278601">
    <property type="interactions" value="16"/>
</dbReference>
<dbReference type="FunCoup" id="Q9UT11">
    <property type="interactions" value="145"/>
</dbReference>
<dbReference type="STRING" id="284812.Q9UT11"/>
<dbReference type="iPTMnet" id="Q9UT11"/>
<dbReference type="SwissPalm" id="Q9UT11"/>
<dbReference type="PaxDb" id="4896-SPAP8A3.03.1"/>
<dbReference type="EnsemblFungi" id="SPAP8A3.03.1">
    <property type="protein sequence ID" value="SPAP8A3.03.1:pep"/>
    <property type="gene ID" value="SPAP8A3.03"/>
</dbReference>
<dbReference type="KEGG" id="spo:2542125"/>
<dbReference type="PomBase" id="SPAP8A3.03"/>
<dbReference type="VEuPathDB" id="FungiDB:SPAP8A3.03"/>
<dbReference type="eggNOG" id="KOG2693">
    <property type="taxonomic scope" value="Eukaryota"/>
</dbReference>
<dbReference type="HOGENOM" id="CLU_015114_0_0_1"/>
<dbReference type="InParanoid" id="Q9UT11"/>
<dbReference type="OMA" id="GMMYIVS"/>
<dbReference type="PhylomeDB" id="Q9UT11"/>
<dbReference type="Reactome" id="R-SPO-442380">
    <property type="pathway name" value="Zinc influx into cells by the SLC39 gene family"/>
</dbReference>
<dbReference type="PRO" id="PR:Q9UT11"/>
<dbReference type="Proteomes" id="UP000002485">
    <property type="component" value="Chromosome I"/>
</dbReference>
<dbReference type="GO" id="GO:0005783">
    <property type="term" value="C:endoplasmic reticulum"/>
    <property type="evidence" value="ECO:0007005"/>
    <property type="project" value="PomBase"/>
</dbReference>
<dbReference type="GO" id="GO:0005789">
    <property type="term" value="C:endoplasmic reticulum membrane"/>
    <property type="evidence" value="ECO:0000266"/>
    <property type="project" value="PomBase"/>
</dbReference>
<dbReference type="GO" id="GO:0005385">
    <property type="term" value="F:zinc ion transmembrane transporter activity"/>
    <property type="evidence" value="ECO:0000318"/>
    <property type="project" value="GO_Central"/>
</dbReference>
<dbReference type="GO" id="GO:0006882">
    <property type="term" value="P:intracellular zinc ion homeostasis"/>
    <property type="evidence" value="ECO:0000318"/>
    <property type="project" value="GO_Central"/>
</dbReference>
<dbReference type="GO" id="GO:0071577">
    <property type="term" value="P:zinc ion transmembrane transport"/>
    <property type="evidence" value="ECO:0000318"/>
    <property type="project" value="GO_Central"/>
</dbReference>
<dbReference type="InterPro" id="IPR036259">
    <property type="entry name" value="MFS_trans_sf"/>
</dbReference>
<dbReference type="InterPro" id="IPR003689">
    <property type="entry name" value="ZIP"/>
</dbReference>
<dbReference type="PANTHER" id="PTHR16950">
    <property type="entry name" value="ZINC TRANSPORTER SLC39A7 HISTIDINE-RICH MEMBRANE PROTEIN KE4"/>
    <property type="match status" value="1"/>
</dbReference>
<dbReference type="PANTHER" id="PTHR16950:SF16">
    <property type="entry name" value="ZINC TRANSPORTER ZIP13"/>
    <property type="match status" value="1"/>
</dbReference>
<dbReference type="Pfam" id="PF02535">
    <property type="entry name" value="Zip"/>
    <property type="match status" value="1"/>
</dbReference>
<dbReference type="SUPFAM" id="SSF103473">
    <property type="entry name" value="MFS general substrate transporter"/>
    <property type="match status" value="1"/>
</dbReference>
<keyword id="KW-0256">Endoplasmic reticulum</keyword>
<keyword id="KW-0472">Membrane</keyword>
<keyword id="KW-1185">Reference proteome</keyword>
<keyword id="KW-0732">Signal</keyword>
<keyword id="KW-0812">Transmembrane</keyword>
<keyword id="KW-1133">Transmembrane helix</keyword>
<protein>
    <recommendedName>
        <fullName>Uncharacterized zinc transporter P8A3.03</fullName>
    </recommendedName>
</protein>
<comment type="subcellular location">
    <subcellularLocation>
        <location evidence="3">Endoplasmic reticulum membrane</location>
        <topology evidence="3">Multi-pass membrane protein</topology>
    </subcellularLocation>
</comment>
<comment type="similarity">
    <text evidence="4">Belongs to the ZIP transporter (TC 2.A.5) family. KE4/Catsup subfamily.</text>
</comment>
<sequence>MFLLQRFFIYGLFLACFYTTVFGEKHFEAEEYRDSFLSQENMNKINHTTIERLFREMTENDPSLLSSSKTLAELSKGELAKAREDLKSVLSFLKNNLPVDTESSSEAFTIEKDNNSCVWLNSVKSFVEKQFSYSSGTNGILATFLTAIPPNIFILLVPKSFDTSMLNLFVAVSAGSLLGDVFLQLLPTVYSTNGGDFPASSVYSILIGALVFFLMDKGIRILIHERPSSLSKPKKDGEETSSVNKPSASSTQTDVKGVEGLRKRNVKDDQNSKGHEPDLIRHVVEEVSEEYNDKTVVYLNLLCDSFHNFMDGLAITSAFFTNTSIGISTTFAVLLHEIPAEIGDLAILLRNGYTKSQVLVLQMITMVTGLLGAIVATYIYTASSSSSPYGSFLLQLEDKLLPFTAGGFLYIAYLGVFPELLEINLSKGKLGNMIYTALYMMFIVGGFSFLYYV</sequence>
<organism>
    <name type="scientific">Schizosaccharomyces pombe (strain 972 / ATCC 24843)</name>
    <name type="common">Fission yeast</name>
    <dbReference type="NCBI Taxonomy" id="284812"/>
    <lineage>
        <taxon>Eukaryota</taxon>
        <taxon>Fungi</taxon>
        <taxon>Dikarya</taxon>
        <taxon>Ascomycota</taxon>
        <taxon>Taphrinomycotina</taxon>
        <taxon>Schizosaccharomycetes</taxon>
        <taxon>Schizosaccharomycetales</taxon>
        <taxon>Schizosaccharomycetaceae</taxon>
        <taxon>Schizosaccharomyces</taxon>
    </lineage>
</organism>
<proteinExistence type="inferred from homology"/>